<dbReference type="EMBL" id="AY357936">
    <property type="protein sequence ID" value="AAQ56048.1"/>
    <property type="molecule type" value="Genomic_DNA"/>
</dbReference>
<dbReference type="EMBL" id="AY357927">
    <property type="protein sequence ID" value="AAQ56048.1"/>
    <property type="status" value="JOINED"/>
    <property type="molecule type" value="Genomic_DNA"/>
</dbReference>
<dbReference type="EMBL" id="AY357928">
    <property type="protein sequence ID" value="AAQ56048.1"/>
    <property type="status" value="JOINED"/>
    <property type="molecule type" value="Genomic_DNA"/>
</dbReference>
<dbReference type="EMBL" id="AY357929">
    <property type="protein sequence ID" value="AAQ56048.1"/>
    <property type="status" value="JOINED"/>
    <property type="molecule type" value="Genomic_DNA"/>
</dbReference>
<dbReference type="EMBL" id="AY357931">
    <property type="protein sequence ID" value="AAQ56048.1"/>
    <property type="status" value="JOINED"/>
    <property type="molecule type" value="Genomic_DNA"/>
</dbReference>
<dbReference type="EMBL" id="AY357933">
    <property type="protein sequence ID" value="AAQ56048.1"/>
    <property type="status" value="JOINED"/>
    <property type="molecule type" value="Genomic_DNA"/>
</dbReference>
<dbReference type="EMBL" id="AY357935">
    <property type="protein sequence ID" value="AAQ56048.1"/>
    <property type="status" value="JOINED"/>
    <property type="molecule type" value="Genomic_DNA"/>
</dbReference>
<dbReference type="EMBL" id="AY357934">
    <property type="protein sequence ID" value="AAQ56048.1"/>
    <property type="status" value="JOINED"/>
    <property type="molecule type" value="Genomic_DNA"/>
</dbReference>
<dbReference type="EMBL" id="AY357932">
    <property type="protein sequence ID" value="AAQ56048.1"/>
    <property type="status" value="JOINED"/>
    <property type="molecule type" value="Genomic_DNA"/>
</dbReference>
<dbReference type="EMBL" id="AY357930">
    <property type="protein sequence ID" value="AAQ56048.1"/>
    <property type="status" value="JOINED"/>
    <property type="molecule type" value="Genomic_DNA"/>
</dbReference>
<dbReference type="EMBL" id="AY357925">
    <property type="protein sequence ID" value="AAQ56049.1"/>
    <property type="molecule type" value="mRNA"/>
</dbReference>
<dbReference type="EMBL" id="AB179420">
    <property type="protein sequence ID" value="BAE02471.1"/>
    <property type="molecule type" value="mRNA"/>
</dbReference>
<dbReference type="RefSeq" id="NP_001270510.1">
    <property type="nucleotide sequence ID" value="NM_001283581.1"/>
</dbReference>
<dbReference type="RefSeq" id="XP_005577660.2">
    <property type="nucleotide sequence ID" value="XM_005577603.4"/>
</dbReference>
<dbReference type="SMR" id="Q6UY87"/>
<dbReference type="STRING" id="9541.ENSMFAP00000020389"/>
<dbReference type="GeneID" id="101925702"/>
<dbReference type="KEGG" id="mcf:101925702"/>
<dbReference type="CTD" id="7439"/>
<dbReference type="eggNOG" id="KOG3547">
    <property type="taxonomic scope" value="Eukaryota"/>
</dbReference>
<dbReference type="Proteomes" id="UP000233100">
    <property type="component" value="Unplaced"/>
</dbReference>
<dbReference type="GO" id="GO:0016323">
    <property type="term" value="C:basolateral plasma membrane"/>
    <property type="evidence" value="ECO:0000250"/>
    <property type="project" value="UniProtKB"/>
</dbReference>
<dbReference type="GO" id="GO:0034707">
    <property type="term" value="C:chloride channel complex"/>
    <property type="evidence" value="ECO:0007669"/>
    <property type="project" value="UniProtKB-KW"/>
</dbReference>
<dbReference type="GO" id="GO:0098857">
    <property type="term" value="C:membrane microdomain"/>
    <property type="evidence" value="ECO:0000250"/>
    <property type="project" value="UniProtKB"/>
</dbReference>
<dbReference type="GO" id="GO:0005886">
    <property type="term" value="C:plasma membrane"/>
    <property type="evidence" value="ECO:0000250"/>
    <property type="project" value="UniProtKB"/>
</dbReference>
<dbReference type="GO" id="GO:0098793">
    <property type="term" value="C:presynapse"/>
    <property type="evidence" value="ECO:0007669"/>
    <property type="project" value="GOC"/>
</dbReference>
<dbReference type="GO" id="GO:0160133">
    <property type="term" value="F:bicarbonate channel activity"/>
    <property type="evidence" value="ECO:0000250"/>
    <property type="project" value="UniProtKB"/>
</dbReference>
<dbReference type="GO" id="GO:0005229">
    <property type="term" value="F:intracellularly calcium-gated chloride channel activity"/>
    <property type="evidence" value="ECO:0000250"/>
    <property type="project" value="UniProtKB"/>
</dbReference>
<dbReference type="GO" id="GO:0022834">
    <property type="term" value="F:ligand-gated channel activity"/>
    <property type="evidence" value="ECO:0000250"/>
    <property type="project" value="UniProtKB"/>
</dbReference>
<dbReference type="GO" id="GO:0046872">
    <property type="term" value="F:metal ion binding"/>
    <property type="evidence" value="ECO:0007669"/>
    <property type="project" value="UniProtKB-KW"/>
</dbReference>
<dbReference type="GO" id="GO:0061534">
    <property type="term" value="P:gamma-aminobutyric acid secretion, neurotransmission"/>
    <property type="evidence" value="ECO:0000250"/>
    <property type="project" value="UniProtKB"/>
</dbReference>
<dbReference type="GO" id="GO:0014047">
    <property type="term" value="P:glutamate secretion"/>
    <property type="evidence" value="ECO:0000250"/>
    <property type="project" value="UniProtKB"/>
</dbReference>
<dbReference type="GO" id="GO:0051259">
    <property type="term" value="P:protein complex oligomerization"/>
    <property type="evidence" value="ECO:0000250"/>
    <property type="project" value="UniProtKB"/>
</dbReference>
<dbReference type="GO" id="GO:0048167">
    <property type="term" value="P:regulation of synaptic plasticity"/>
    <property type="evidence" value="ECO:0000250"/>
    <property type="project" value="UniProtKB"/>
</dbReference>
<dbReference type="InterPro" id="IPR000615">
    <property type="entry name" value="Bestrophin"/>
</dbReference>
<dbReference type="InterPro" id="IPR021134">
    <property type="entry name" value="Bestrophin-like"/>
</dbReference>
<dbReference type="PANTHER" id="PTHR10736">
    <property type="entry name" value="BESTROPHIN"/>
    <property type="match status" value="1"/>
</dbReference>
<dbReference type="PANTHER" id="PTHR10736:SF4">
    <property type="entry name" value="BESTROPHIN-1"/>
    <property type="match status" value="1"/>
</dbReference>
<dbReference type="Pfam" id="PF01062">
    <property type="entry name" value="Bestrophin"/>
    <property type="match status" value="1"/>
</dbReference>
<comment type="function">
    <text evidence="1 2">Ligand-gated anion channel that allows the movement of anions across cell membranes when activated by calcium (Ca2+). Allows the movement of chloride and hydrogencarbonate. Found in a partially open conformation leading to significantly smaller chloride movement (By similarity). Upon F2R/PAR-1 activation, the sequestered calcium is released into the cytosol of astrocytes, leading to the (Ca2+)-dependent release of L-glutamate into the synaptic cleft that targets the neuronal postsynaptic GRIN2A/NMDAR receptor resulting in the synaptic plasticity regulation. Upon activation of the norepinephrine-alpha-1 adrenergic receptor signaling pathway, transports as well D-serine than L-glutamate in a (Ca2+)-dependent manner, leading to activation of adjacent NMDAR receptors and therefore regulates the heterosynaptic long-term depression and metaplasticity during initial memory acquisition. Releases the 4-aminobutanoate neurotransmitter in a (Ca2+)-dependent manner, and participates in its tonic release from cerebellar glial cells (By similarity).</text>
</comment>
<comment type="catalytic activity">
    <reaction evidence="1">
        <text>chloride(in) = chloride(out)</text>
        <dbReference type="Rhea" id="RHEA:29823"/>
        <dbReference type="ChEBI" id="CHEBI:17996"/>
    </reaction>
</comment>
<comment type="catalytic activity">
    <reaction evidence="1">
        <text>hydrogencarbonate(in) = hydrogencarbonate(out)</text>
        <dbReference type="Rhea" id="RHEA:28695"/>
        <dbReference type="ChEBI" id="CHEBI:17544"/>
    </reaction>
</comment>
<comment type="catalytic activity">
    <reaction evidence="2">
        <text>4-aminobutanoate(in) = 4-aminobutanoate(out)</text>
        <dbReference type="Rhea" id="RHEA:35035"/>
        <dbReference type="ChEBI" id="CHEBI:59888"/>
    </reaction>
</comment>
<comment type="catalytic activity">
    <reaction evidence="2">
        <text>L-glutamate(out) = L-glutamate(in)</text>
        <dbReference type="Rhea" id="RHEA:66336"/>
        <dbReference type="ChEBI" id="CHEBI:29985"/>
    </reaction>
</comment>
<comment type="subunit">
    <text evidence="1">Interacts with YWHAG; this interaction promotes the ligand-gated L-glutamate channel activity leading to the positive regulation of NMDA glutamate receptor activity through the L-glutamate secretion.</text>
</comment>
<comment type="subcellular location">
    <subcellularLocation>
        <location evidence="1">Cell membrane</location>
        <topology evidence="1">Multi-pass membrane protein</topology>
    </subcellularLocation>
    <subcellularLocation>
        <location evidence="1">Basolateral cell membrane</location>
        <topology evidence="1">Multi-pass membrane protein</topology>
    </subcellularLocation>
    <text evidence="2">Localized at the surface membrane of microdomains adjacent to glutamatergic synapses.</text>
</comment>
<comment type="domain">
    <text evidence="1">The C-terminal auto-inhibitory segment (AS) modulates the open/closed conformation of the channel. In a closed conformation, the C-terminal auto-inhibitory segment constricts the channel concentrically by wrapping around the channel periphery in an inter-protomer manner. To allow chloride movement, the C-terminal auto-inhibitory segment opens partially, leading to significantly smaller chloride movement.</text>
</comment>
<comment type="similarity">
    <text evidence="3">Belongs to the anion channel-forming bestrophin (TC 1.A.46) family. Calcium-sensitive chloride channel subfamily.</text>
</comment>
<proteinExistence type="evidence at transcript level"/>
<keyword id="KW-0106">Calcium</keyword>
<keyword id="KW-1003">Cell membrane</keyword>
<keyword id="KW-0868">Chloride</keyword>
<keyword id="KW-0869">Chloride channel</keyword>
<keyword id="KW-0407">Ion channel</keyword>
<keyword id="KW-0406">Ion transport</keyword>
<keyword id="KW-0472">Membrane</keyword>
<keyword id="KW-0479">Metal-binding</keyword>
<keyword id="KW-0597">Phosphoprotein</keyword>
<keyword id="KW-1185">Reference proteome</keyword>
<keyword id="KW-0716">Sensory transduction</keyword>
<keyword id="KW-0812">Transmembrane</keyword>
<keyword id="KW-1133">Transmembrane helix</keyword>
<keyword id="KW-0813">Transport</keyword>
<sequence length="585" mass="67488">MTITYTSQVANARLGSFSRLLLCWRGSIYKLLYGEFFIFLLCYYIIRFIYRLALTEEQQLMFEKLTLYCDSYIQLIPISFVLGFYVTLVVTRWWNQYENLPWPDRLMSLVSGFVEGKDEQGRLLRRTLIRYANLGNVLILRSVSTAVYKRFPSAQHLVQAGFMTPAEHKQLEKLSLPHNMFWVPWVWFANLSMKAWLGGRIRDPILLQSLLNEMNTLRTQCGHLYAYDWISIPLVYTQVVTVAVYSFFLTCLVGRQFLNPAKAYPGHELDLVVPVFTFLQFFFYVGWLKVAEQLINPFGEDDDDFETNWIVDRNLQVSLLAVDEMHQDLPRMEPDMYWNEPEPHPPYTAASAQFRRASFMGSTFNISLNKEEMEFQPNQEDKEDAHTGIIGRFLGLQSHDHHPPGANSRTKLLWPKRESLLHEGLPKNHKAVKQNVRGLEDNKAWKLKAVDAFKSAPLYQRPGYYSAPQTPLSPTPMFFPPEPSVLSKLHSVTGIDTKDKSLKTVSSGAKNSSELLSGSDGALMEHPEVSHVRRKTVEFNLTDMPEIPENHLKEPLELSTTNIHATLKDHVDPYWALENRDEAHS</sequence>
<name>BEST1_MACFA</name>
<protein>
    <recommendedName>
        <fullName>Bestrophin-1</fullName>
    </recommendedName>
    <alternativeName>
        <fullName>Vitelliform macular dystrophy protein 2</fullName>
    </alternativeName>
</protein>
<feature type="chain" id="PRO_0000143115" description="Bestrophin-1">
    <location>
        <begin position="1"/>
        <end position="585"/>
    </location>
</feature>
<feature type="topological domain" description="Cytoplasmic" evidence="1">
    <location>
        <begin position="1"/>
        <end position="31"/>
    </location>
</feature>
<feature type="transmembrane region" description="Helical" evidence="1">
    <location>
        <begin position="32"/>
        <end position="51"/>
    </location>
</feature>
<feature type="topological domain" description="Extracellular" evidence="1">
    <location>
        <begin position="52"/>
        <end position="60"/>
    </location>
</feature>
<feature type="transmembrane region" description="Helical" evidence="1">
    <location>
        <begin position="61"/>
        <end position="82"/>
    </location>
</feature>
<feature type="topological domain" description="Cytoplasmic" evidence="1">
    <location>
        <begin position="83"/>
        <end position="237"/>
    </location>
</feature>
<feature type="transmembrane region" description="Helical" evidence="1">
    <location>
        <begin position="238"/>
        <end position="255"/>
    </location>
</feature>
<feature type="topological domain" description="Extracellular" evidence="1">
    <location>
        <begin position="256"/>
        <end position="274"/>
    </location>
</feature>
<feature type="transmembrane region" description="Helical" evidence="1">
    <location>
        <begin position="275"/>
        <end position="288"/>
    </location>
</feature>
<feature type="topological domain" description="Cytoplasmic" evidence="1">
    <location>
        <begin position="289"/>
        <end position="585"/>
    </location>
</feature>
<feature type="region of interest" description="Auto-inhibitory segment" evidence="1">
    <location>
        <begin position="346"/>
        <end position="379"/>
    </location>
</feature>
<feature type="binding site" description="in other chain" evidence="1">
    <location>
        <position position="10"/>
    </location>
    <ligand>
        <name>Ca(2+)</name>
        <dbReference type="ChEBI" id="CHEBI:29108"/>
        <note>ligand shared between two neighboring subunits</note>
    </ligand>
</feature>
<feature type="binding site" evidence="1">
    <location>
        <position position="293"/>
    </location>
    <ligand>
        <name>Ca(2+)</name>
        <dbReference type="ChEBI" id="CHEBI:29108"/>
        <note>ligand shared between two neighboring subunits</note>
    </ligand>
</feature>
<feature type="binding site" evidence="1">
    <location>
        <position position="296"/>
    </location>
    <ligand>
        <name>Ca(2+)</name>
        <dbReference type="ChEBI" id="CHEBI:29108"/>
        <note>ligand shared between two neighboring subunits</note>
    </ligand>
</feature>
<feature type="binding site" evidence="1">
    <location>
        <position position="301"/>
    </location>
    <ligand>
        <name>Ca(2+)</name>
        <dbReference type="ChEBI" id="CHEBI:29108"/>
        <note>ligand shared between two neighboring subunits</note>
    </ligand>
</feature>
<feature type="binding site" evidence="1">
    <location>
        <position position="304"/>
    </location>
    <ligand>
        <name>Ca(2+)</name>
        <dbReference type="ChEBI" id="CHEBI:29108"/>
        <note>ligand shared between two neighboring subunits</note>
    </ligand>
</feature>
<feature type="sequence conflict" description="In Ref. 2; BAE02471." evidence="3" ref="2">
    <original>N</original>
    <variation>Y</variation>
    <location>
        <position position="369"/>
    </location>
</feature>
<evidence type="ECO:0000250" key="1">
    <source>
        <dbReference type="UniProtKB" id="O76090"/>
    </source>
</evidence>
<evidence type="ECO:0000250" key="2">
    <source>
        <dbReference type="UniProtKB" id="O88870"/>
    </source>
</evidence>
<evidence type="ECO:0000305" key="3"/>
<accession>Q6UY87</accession>
<accession>Q4R348</accession>
<gene>
    <name type="primary">BEST1</name>
    <name type="synonym">VMD2</name>
    <name type="ORF">QtsA-19642</name>
</gene>
<reference key="1">
    <citation type="submission" date="2003-08" db="EMBL/GenBank/DDBJ databases">
        <title>Molecular cloning of VMD2 gene from cynomolgus Monkey (Macaca fascicularis).</title>
        <authorList>
            <person name="Okamoto H."/>
            <person name="Umeda S."/>
            <person name="Suzuki M.T."/>
            <person name="Yoshikawa Y."/>
            <person name="Tanaka Y."/>
            <person name="Iwata T."/>
        </authorList>
    </citation>
    <scope>NUCLEOTIDE SEQUENCE [GENOMIC DNA / MRNA]</scope>
</reference>
<reference key="2">
    <citation type="submission" date="2005-06" db="EMBL/GenBank/DDBJ databases">
        <title>DNA sequences of macaque genes expressed in brain or testis and its evolutionary implications.</title>
        <authorList>
            <consortium name="International consortium for macaque cDNA sequencing and analysis"/>
        </authorList>
    </citation>
    <scope>NUCLEOTIDE SEQUENCE [LARGE SCALE MRNA]</scope>
    <source>
        <tissue>Testis</tissue>
    </source>
</reference>
<organism>
    <name type="scientific">Macaca fascicularis</name>
    <name type="common">Crab-eating macaque</name>
    <name type="synonym">Cynomolgus monkey</name>
    <dbReference type="NCBI Taxonomy" id="9541"/>
    <lineage>
        <taxon>Eukaryota</taxon>
        <taxon>Metazoa</taxon>
        <taxon>Chordata</taxon>
        <taxon>Craniata</taxon>
        <taxon>Vertebrata</taxon>
        <taxon>Euteleostomi</taxon>
        <taxon>Mammalia</taxon>
        <taxon>Eutheria</taxon>
        <taxon>Euarchontoglires</taxon>
        <taxon>Primates</taxon>
        <taxon>Haplorrhini</taxon>
        <taxon>Catarrhini</taxon>
        <taxon>Cercopithecidae</taxon>
        <taxon>Cercopithecinae</taxon>
        <taxon>Macaca</taxon>
    </lineage>
</organism>